<reference evidence="9" key="1">
    <citation type="journal article" date="2007" name="Geochim. Cosmochim. Acta">
        <title>Investigation of the protein osteocalcin of Camelops hesternus: Sequence, structure and phylogenetic implications.</title>
        <authorList>
            <person name="Humpula J.F."/>
            <person name="Ostrom P.H."/>
            <person name="Gandhi H."/>
            <person name="Strahler J.R."/>
            <person name="Walker A.K."/>
            <person name="Stafford T.W. Jr."/>
            <person name="Smith J.J."/>
            <person name="Voorhies M.R."/>
            <person name="Corner R.G."/>
            <person name="Andrews P.C."/>
        </authorList>
    </citation>
    <scope>PROTEIN SEQUENCE</scope>
    <scope>HYDROXYLATION AT PRO-9</scope>
    <scope>DISULFIDE BOND</scope>
    <source>
        <tissue evidence="7">Bone</tissue>
    </source>
</reference>
<gene>
    <name evidence="2" type="primary">BGLAP</name>
</gene>
<sequence length="49" mass="5592">YLDHGLGAPAPYVDPLEPKREVCELNPDCDELADQMGFQEAYRRFYGTT</sequence>
<accession>P86313</accession>
<protein>
    <recommendedName>
        <fullName evidence="8">Osteocalcin</fullName>
    </recommendedName>
    <alternativeName>
        <fullName evidence="2">Bone Gla protein</fullName>
        <shortName evidence="2">BGP</shortName>
    </alternativeName>
    <alternativeName>
        <fullName evidence="2">Gamma-carboxyglutamic acid-containing protein</fullName>
    </alternativeName>
</protein>
<proteinExistence type="evidence at protein level"/>
<feature type="chain" id="PRO_0000378904" description="Osteocalcin">
    <location>
        <begin position="1"/>
        <end position="49"/>
    </location>
</feature>
<feature type="domain" description="Gla" evidence="6">
    <location>
        <begin position="1"/>
        <end position="47"/>
    </location>
</feature>
<feature type="binding site" evidence="2">
    <location>
        <position position="17"/>
    </location>
    <ligand>
        <name>Ca(2+)</name>
        <dbReference type="ChEBI" id="CHEBI:29108"/>
        <label>1</label>
    </ligand>
</feature>
<feature type="binding site" evidence="2">
    <location>
        <position position="21"/>
    </location>
    <ligand>
        <name>Ca(2+)</name>
        <dbReference type="ChEBI" id="CHEBI:29108"/>
        <label>2</label>
    </ligand>
</feature>
<feature type="binding site" evidence="2">
    <location>
        <position position="24"/>
    </location>
    <ligand>
        <name>Ca(2+)</name>
        <dbReference type="ChEBI" id="CHEBI:29108"/>
        <label>2</label>
    </ligand>
</feature>
<feature type="binding site" evidence="2">
    <location>
        <position position="24"/>
    </location>
    <ligand>
        <name>Ca(2+)</name>
        <dbReference type="ChEBI" id="CHEBI:29108"/>
        <label>3</label>
    </ligand>
</feature>
<feature type="binding site" evidence="2">
    <location>
        <position position="30"/>
    </location>
    <ligand>
        <name>Ca(2+)</name>
        <dbReference type="ChEBI" id="CHEBI:29108"/>
        <label>3</label>
    </ligand>
</feature>
<feature type="modified residue" description="4-hydroxyproline" evidence="7">
    <location>
        <position position="9"/>
    </location>
</feature>
<feature type="modified residue" description="4-carboxyglutamate" evidence="1 6">
    <location>
        <position position="17"/>
    </location>
</feature>
<feature type="modified residue" description="4-carboxyglutamate" evidence="3 6">
    <location>
        <position position="21"/>
    </location>
</feature>
<feature type="modified residue" description="4-carboxyglutamate" evidence="3 6">
    <location>
        <position position="24"/>
    </location>
</feature>
<feature type="disulfide bond" evidence="6 7">
    <location>
        <begin position="23"/>
        <end position="29"/>
    </location>
</feature>
<comment type="function">
    <text evidence="4">The carboxylated form is one of the main organic components of the bone matrix, which constitutes 1-2% of the total bone protein: it acts as a negative regulator of bone formation and is required to limit bone formation without impairing bone resorption or mineralization. The carboxylated form binds strongly to apatite and calcium.</text>
</comment>
<comment type="function">
    <text evidence="4">The uncarboxylated form acts as a hormone secreted by osteoblasts, which regulates different cellular processes, such as energy metabolism, male fertility and brain development. Regulates of energy metabolism by acting as a hormone favoring pancreatic beta-cell proliferation, insulin secretion and sensitivity and energy expenditure. Uncarboxylated osteocalcin hormone also promotes testosterone production in the testes: acts as a ligand for G protein-coupled receptor GPRC6A at the surface of Leydig cells, initiating a signaling response that promotes the expression of enzymes required for testosterone synthesis in a CREB-dependent manner. Also acts as a regulator of brain development: osteocalcin hormone crosses the blood-brain barrier and acts as a ligand for GPR158 on neurons, initiating a signaling response that prevents neuronal apoptosis in the hippocampus, favors the synthesis of all monoamine neurotransmitters and inhibits that of gamma-aminobutyric acid (GABA). Osteocalcin also crosses the placenta during pregnancy and maternal osteocalcin is required for fetal brain development.</text>
</comment>
<comment type="subcellular location">
    <subcellularLocation>
        <location evidence="2">Secreted</location>
    </subcellularLocation>
</comment>
<comment type="PTM">
    <text evidence="2">Gamma-carboxyglutamic acid residues are formed by vitamin K dependent carboxylation. These residues are essential for the binding of calcium (By similarity).</text>
</comment>
<comment type="similarity">
    <text evidence="5">Belongs to the osteocalcin/matrix Gla protein family.</text>
</comment>
<evidence type="ECO:0000250" key="1">
    <source>
        <dbReference type="UniProtKB" id="P02818"/>
    </source>
</evidence>
<evidence type="ECO:0000250" key="2">
    <source>
        <dbReference type="UniProtKB" id="P02820"/>
    </source>
</evidence>
<evidence type="ECO:0000250" key="3">
    <source>
        <dbReference type="UniProtKB" id="P83489"/>
    </source>
</evidence>
<evidence type="ECO:0000250" key="4">
    <source>
        <dbReference type="UniProtKB" id="P86546"/>
    </source>
</evidence>
<evidence type="ECO:0000255" key="5"/>
<evidence type="ECO:0000255" key="6">
    <source>
        <dbReference type="PROSITE-ProRule" id="PRU00463"/>
    </source>
</evidence>
<evidence type="ECO:0000269" key="7">
    <source ref="1"/>
</evidence>
<evidence type="ECO:0000303" key="8">
    <source ref="1"/>
</evidence>
<evidence type="ECO:0000305" key="9"/>
<name>OSTCN_CAMDR</name>
<keyword id="KW-0091">Biomineralization</keyword>
<keyword id="KW-0106">Calcium</keyword>
<keyword id="KW-0903">Direct protein sequencing</keyword>
<keyword id="KW-1015">Disulfide bond</keyword>
<keyword id="KW-0301">Gamma-carboxyglutamic acid</keyword>
<keyword id="KW-0372">Hormone</keyword>
<keyword id="KW-0379">Hydroxylation</keyword>
<keyword id="KW-0479">Metal-binding</keyword>
<keyword id="KW-0964">Secreted</keyword>
<dbReference type="SMR" id="P86313"/>
<dbReference type="STRING" id="9838.ENSCDRP00005017016"/>
<dbReference type="GO" id="GO:0005737">
    <property type="term" value="C:cytoplasm"/>
    <property type="evidence" value="ECO:0000250"/>
    <property type="project" value="UniProtKB"/>
</dbReference>
<dbReference type="GO" id="GO:0005576">
    <property type="term" value="C:extracellular region"/>
    <property type="evidence" value="ECO:0007669"/>
    <property type="project" value="UniProtKB-SubCell"/>
</dbReference>
<dbReference type="GO" id="GO:0005509">
    <property type="term" value="F:calcium ion binding"/>
    <property type="evidence" value="ECO:0007669"/>
    <property type="project" value="InterPro"/>
</dbReference>
<dbReference type="GO" id="GO:0005179">
    <property type="term" value="F:hormone activity"/>
    <property type="evidence" value="ECO:0000250"/>
    <property type="project" value="UniProtKB"/>
</dbReference>
<dbReference type="GO" id="GO:0046848">
    <property type="term" value="F:hydroxyapatite binding"/>
    <property type="evidence" value="ECO:0007669"/>
    <property type="project" value="TreeGrafter"/>
</dbReference>
<dbReference type="GO" id="GO:0008147">
    <property type="term" value="F:structural constituent of bone"/>
    <property type="evidence" value="ECO:0000250"/>
    <property type="project" value="UniProtKB"/>
</dbReference>
<dbReference type="GO" id="GO:0031214">
    <property type="term" value="P:biomineral tissue development"/>
    <property type="evidence" value="ECO:0007669"/>
    <property type="project" value="UniProtKB-KW"/>
</dbReference>
<dbReference type="GO" id="GO:0060348">
    <property type="term" value="P:bone development"/>
    <property type="evidence" value="ECO:0007669"/>
    <property type="project" value="InterPro"/>
</dbReference>
<dbReference type="GO" id="GO:0007420">
    <property type="term" value="P:brain development"/>
    <property type="evidence" value="ECO:0000250"/>
    <property type="project" value="UniProtKB"/>
</dbReference>
<dbReference type="GO" id="GO:0032869">
    <property type="term" value="P:cellular response to insulin stimulus"/>
    <property type="evidence" value="ECO:0000250"/>
    <property type="project" value="UniProtKB"/>
</dbReference>
<dbReference type="GO" id="GO:0050890">
    <property type="term" value="P:cognition"/>
    <property type="evidence" value="ECO:0000250"/>
    <property type="project" value="UniProtKB"/>
</dbReference>
<dbReference type="GO" id="GO:0042593">
    <property type="term" value="P:glucose homeostasis"/>
    <property type="evidence" value="ECO:0000250"/>
    <property type="project" value="UniProtKB"/>
</dbReference>
<dbReference type="GO" id="GO:0007611">
    <property type="term" value="P:learning or memory"/>
    <property type="evidence" value="ECO:0000250"/>
    <property type="project" value="UniProtKB"/>
</dbReference>
<dbReference type="GO" id="GO:1903011">
    <property type="term" value="P:negative regulation of bone development"/>
    <property type="evidence" value="ECO:0000250"/>
    <property type="project" value="UniProtKB"/>
</dbReference>
<dbReference type="GO" id="GO:0001649">
    <property type="term" value="P:osteoblast differentiation"/>
    <property type="evidence" value="ECO:0007669"/>
    <property type="project" value="TreeGrafter"/>
</dbReference>
<dbReference type="GO" id="GO:0001956">
    <property type="term" value="P:positive regulation of neurotransmitter secretion"/>
    <property type="evidence" value="ECO:0000250"/>
    <property type="project" value="UniProtKB"/>
</dbReference>
<dbReference type="GO" id="GO:0030500">
    <property type="term" value="P:regulation of bone mineralization"/>
    <property type="evidence" value="ECO:0007669"/>
    <property type="project" value="InterPro"/>
</dbReference>
<dbReference type="GO" id="GO:1900076">
    <property type="term" value="P:regulation of cellular response to insulin stimulus"/>
    <property type="evidence" value="ECO:0007669"/>
    <property type="project" value="InterPro"/>
</dbReference>
<dbReference type="GO" id="GO:2000224">
    <property type="term" value="P:regulation of testosterone biosynthetic process"/>
    <property type="evidence" value="ECO:0000250"/>
    <property type="project" value="UniProtKB"/>
</dbReference>
<dbReference type="GO" id="GO:0032571">
    <property type="term" value="P:response to vitamin K"/>
    <property type="evidence" value="ECO:0007669"/>
    <property type="project" value="InterPro"/>
</dbReference>
<dbReference type="GO" id="GO:0044342">
    <property type="term" value="P:type B pancreatic cell proliferation"/>
    <property type="evidence" value="ECO:0000250"/>
    <property type="project" value="UniProtKB"/>
</dbReference>
<dbReference type="InterPro" id="IPR035972">
    <property type="entry name" value="GLA-like_dom_SF"/>
</dbReference>
<dbReference type="InterPro" id="IPR000294">
    <property type="entry name" value="GLA_domain"/>
</dbReference>
<dbReference type="InterPro" id="IPR039176">
    <property type="entry name" value="Osteocalcin"/>
</dbReference>
<dbReference type="InterPro" id="IPR002384">
    <property type="entry name" value="Osteocalcin/MGP"/>
</dbReference>
<dbReference type="PANTHER" id="PTHR14235">
    <property type="entry name" value="OSTEOCALCIN"/>
    <property type="match status" value="1"/>
</dbReference>
<dbReference type="PANTHER" id="PTHR14235:SF0">
    <property type="entry name" value="OSTEOCALCIN"/>
    <property type="match status" value="1"/>
</dbReference>
<dbReference type="PRINTS" id="PR00002">
    <property type="entry name" value="GLABONE"/>
</dbReference>
<dbReference type="SMART" id="SM00069">
    <property type="entry name" value="GLA"/>
    <property type="match status" value="1"/>
</dbReference>
<dbReference type="SUPFAM" id="SSF57630">
    <property type="entry name" value="GLA-domain"/>
    <property type="match status" value="1"/>
</dbReference>
<dbReference type="PROSITE" id="PS00011">
    <property type="entry name" value="GLA_1"/>
    <property type="match status" value="1"/>
</dbReference>
<dbReference type="PROSITE" id="PS50998">
    <property type="entry name" value="GLA_2"/>
    <property type="match status" value="1"/>
</dbReference>
<organism>
    <name type="scientific">Camelus dromedarius</name>
    <name type="common">Dromedary</name>
    <name type="synonym">Arabian camel</name>
    <dbReference type="NCBI Taxonomy" id="9838"/>
    <lineage>
        <taxon>Eukaryota</taxon>
        <taxon>Metazoa</taxon>
        <taxon>Chordata</taxon>
        <taxon>Craniata</taxon>
        <taxon>Vertebrata</taxon>
        <taxon>Euteleostomi</taxon>
        <taxon>Mammalia</taxon>
        <taxon>Eutheria</taxon>
        <taxon>Laurasiatheria</taxon>
        <taxon>Artiodactyla</taxon>
        <taxon>Tylopoda</taxon>
        <taxon>Camelidae</taxon>
        <taxon>Camelus</taxon>
    </lineage>
</organism>